<proteinExistence type="inferred from homology"/>
<evidence type="ECO:0000250" key="1"/>
<evidence type="ECO:0000255" key="2"/>
<evidence type="ECO:0000305" key="3"/>
<organism>
    <name type="scientific">Mycobacterium tuberculosis (strain CDC 1551 / Oshkosh)</name>
    <dbReference type="NCBI Taxonomy" id="83331"/>
    <lineage>
        <taxon>Bacteria</taxon>
        <taxon>Bacillati</taxon>
        <taxon>Actinomycetota</taxon>
        <taxon>Actinomycetes</taxon>
        <taxon>Mycobacteriales</taxon>
        <taxon>Mycobacteriaceae</taxon>
        <taxon>Mycobacterium</taxon>
        <taxon>Mycobacterium tuberculosis complex</taxon>
    </lineage>
</organism>
<keyword id="KW-0067">ATP-binding</keyword>
<keyword id="KW-0173">Coenzyme A biosynthesis</keyword>
<keyword id="KW-0963">Cytoplasm</keyword>
<keyword id="KW-0418">Kinase</keyword>
<keyword id="KW-0547">Nucleotide-binding</keyword>
<keyword id="KW-1185">Reference proteome</keyword>
<keyword id="KW-0808">Transferase</keyword>
<sequence>MSRLSEPSPYVEFDRRQWRALRMSTPLALTEEELVGLRGLGEQIDLLEVEEVYLPLARLIHLQVAARQRLFAATAEFLGEPQQNPDRPVPFIIGVAGSVAVGKSTTARVLQALLARWDHHPRVDLVTTDGFLYPNAELQRRNLMHRKGFPESYNRRALMRFVTSVKSGSDYACAPVYSHLHYDIIPGAEQVVRHPDILILEGLNVLQTGPTLMVSDLFDFSLYVDARIEDIEQWYVSRFLAMRTTAFADPESHFHHYAAFSDSQAVVAAREIWRTINRPNLVENILPTRPRATLVLRKDADHSINRLRLRKL</sequence>
<reference key="1">
    <citation type="journal article" date="2002" name="J. Bacteriol.">
        <title>Whole-genome comparison of Mycobacterium tuberculosis clinical and laboratory strains.</title>
        <authorList>
            <person name="Fleischmann R.D."/>
            <person name="Alland D."/>
            <person name="Eisen J.A."/>
            <person name="Carpenter L."/>
            <person name="White O."/>
            <person name="Peterson J.D."/>
            <person name="DeBoy R.T."/>
            <person name="Dodson R.J."/>
            <person name="Gwinn M.L."/>
            <person name="Haft D.H."/>
            <person name="Hickey E.K."/>
            <person name="Kolonay J.F."/>
            <person name="Nelson W.C."/>
            <person name="Umayam L.A."/>
            <person name="Ermolaeva M.D."/>
            <person name="Salzberg S.L."/>
            <person name="Delcher A."/>
            <person name="Utterback T.R."/>
            <person name="Weidman J.F."/>
            <person name="Khouri H.M."/>
            <person name="Gill J."/>
            <person name="Mikula A."/>
            <person name="Bishai W."/>
            <person name="Jacobs W.R. Jr."/>
            <person name="Venter J.C."/>
            <person name="Fraser C.M."/>
        </authorList>
    </citation>
    <scope>NUCLEOTIDE SEQUENCE [LARGE SCALE GENOMIC DNA]</scope>
    <source>
        <strain>CDC 1551 / Oshkosh</strain>
    </source>
</reference>
<protein>
    <recommendedName>
        <fullName>Pantothenate kinase</fullName>
        <ecNumber>2.7.1.33</ecNumber>
    </recommendedName>
    <alternativeName>
        <fullName>Pantothenic acid kinase</fullName>
    </alternativeName>
</protein>
<dbReference type="EC" id="2.7.1.33"/>
<dbReference type="EMBL" id="AE000516">
    <property type="protein sequence ID" value="AAK45382.1"/>
    <property type="molecule type" value="Genomic_DNA"/>
</dbReference>
<dbReference type="PIR" id="B70896">
    <property type="entry name" value="B70896"/>
</dbReference>
<dbReference type="RefSeq" id="WP_003405790.1">
    <property type="nucleotide sequence ID" value="NZ_KK341227.1"/>
</dbReference>
<dbReference type="SMR" id="P9WPA6"/>
<dbReference type="GeneID" id="45425066"/>
<dbReference type="KEGG" id="mtc:MT1124"/>
<dbReference type="PATRIC" id="fig|83331.31.peg.1214"/>
<dbReference type="HOGENOM" id="CLU_053818_1_1_11"/>
<dbReference type="UniPathway" id="UPA00241">
    <property type="reaction ID" value="UER00352"/>
</dbReference>
<dbReference type="Proteomes" id="UP000001020">
    <property type="component" value="Chromosome"/>
</dbReference>
<dbReference type="GO" id="GO:0005737">
    <property type="term" value="C:cytoplasm"/>
    <property type="evidence" value="ECO:0007669"/>
    <property type="project" value="UniProtKB-SubCell"/>
</dbReference>
<dbReference type="GO" id="GO:0005524">
    <property type="term" value="F:ATP binding"/>
    <property type="evidence" value="ECO:0007669"/>
    <property type="project" value="UniProtKB-UniRule"/>
</dbReference>
<dbReference type="GO" id="GO:0004594">
    <property type="term" value="F:pantothenate kinase activity"/>
    <property type="evidence" value="ECO:0007669"/>
    <property type="project" value="UniProtKB-UniRule"/>
</dbReference>
<dbReference type="GO" id="GO:0015937">
    <property type="term" value="P:coenzyme A biosynthetic process"/>
    <property type="evidence" value="ECO:0007669"/>
    <property type="project" value="UniProtKB-UniRule"/>
</dbReference>
<dbReference type="CDD" id="cd02025">
    <property type="entry name" value="PanK"/>
    <property type="match status" value="1"/>
</dbReference>
<dbReference type="FunFam" id="3.40.50.300:FF:000242">
    <property type="entry name" value="Pantothenate kinase"/>
    <property type="match status" value="1"/>
</dbReference>
<dbReference type="Gene3D" id="3.40.50.300">
    <property type="entry name" value="P-loop containing nucleotide triphosphate hydrolases"/>
    <property type="match status" value="1"/>
</dbReference>
<dbReference type="HAMAP" id="MF_00215">
    <property type="entry name" value="Pantothen_kinase_1"/>
    <property type="match status" value="1"/>
</dbReference>
<dbReference type="InterPro" id="IPR027417">
    <property type="entry name" value="P-loop_NTPase"/>
</dbReference>
<dbReference type="InterPro" id="IPR004566">
    <property type="entry name" value="PanK"/>
</dbReference>
<dbReference type="InterPro" id="IPR006083">
    <property type="entry name" value="PRK/URK"/>
</dbReference>
<dbReference type="NCBIfam" id="TIGR00554">
    <property type="entry name" value="panK_bact"/>
    <property type="match status" value="1"/>
</dbReference>
<dbReference type="PANTHER" id="PTHR10285">
    <property type="entry name" value="URIDINE KINASE"/>
    <property type="match status" value="1"/>
</dbReference>
<dbReference type="Pfam" id="PF00485">
    <property type="entry name" value="PRK"/>
    <property type="match status" value="1"/>
</dbReference>
<dbReference type="PIRSF" id="PIRSF000545">
    <property type="entry name" value="Pantothenate_kin"/>
    <property type="match status" value="1"/>
</dbReference>
<dbReference type="SUPFAM" id="SSF52540">
    <property type="entry name" value="P-loop containing nucleoside triphosphate hydrolases"/>
    <property type="match status" value="1"/>
</dbReference>
<name>COAA_MYCTO</name>
<comment type="catalytic activity">
    <reaction>
        <text>(R)-pantothenate + ATP = (R)-4'-phosphopantothenate + ADP + H(+)</text>
        <dbReference type="Rhea" id="RHEA:16373"/>
        <dbReference type="ChEBI" id="CHEBI:10986"/>
        <dbReference type="ChEBI" id="CHEBI:15378"/>
        <dbReference type="ChEBI" id="CHEBI:29032"/>
        <dbReference type="ChEBI" id="CHEBI:30616"/>
        <dbReference type="ChEBI" id="CHEBI:456216"/>
        <dbReference type="EC" id="2.7.1.33"/>
    </reaction>
</comment>
<comment type="pathway">
    <text>Cofactor biosynthesis; coenzyme A biosynthesis; CoA from (R)-pantothenate: step 1/5.</text>
</comment>
<comment type="subcellular location">
    <subcellularLocation>
        <location evidence="1">Cytoplasm</location>
    </subcellularLocation>
</comment>
<comment type="similarity">
    <text evidence="3">Belongs to the prokaryotic pantothenate kinase family.</text>
</comment>
<gene>
    <name type="primary">coaA</name>
    <name type="ordered locus">MT1124</name>
</gene>
<accession>P9WPA6</accession>
<accession>L0T5P3</accession>
<accession>O53440</accession>
<accession>P63810</accession>
<feature type="chain" id="PRO_0000426985" description="Pantothenate kinase">
    <location>
        <begin position="1"/>
        <end position="312"/>
    </location>
</feature>
<feature type="binding site" evidence="2">
    <location>
        <begin position="97"/>
        <end position="104"/>
    </location>
    <ligand>
        <name>ATP</name>
        <dbReference type="ChEBI" id="CHEBI:30616"/>
    </ligand>
</feature>